<comment type="function">
    <text evidence="1">Involved in the binding of tRNA to the ribosomes.</text>
</comment>
<comment type="subunit">
    <text evidence="1">Part of the 30S ribosomal subunit.</text>
</comment>
<comment type="similarity">
    <text evidence="1">Belongs to the universal ribosomal protein uS10 family.</text>
</comment>
<reference key="1">
    <citation type="journal article" date="2004" name="Proc. Natl. Acad. Sci. U.S.A.">
        <title>Insights into the evolution of Yersinia pestis through whole-genome comparison with Yersinia pseudotuberculosis.</title>
        <authorList>
            <person name="Chain P.S.G."/>
            <person name="Carniel E."/>
            <person name="Larimer F.W."/>
            <person name="Lamerdin J."/>
            <person name="Stoutland P.O."/>
            <person name="Regala W.M."/>
            <person name="Georgescu A.M."/>
            <person name="Vergez L.M."/>
            <person name="Land M.L."/>
            <person name="Motin V.L."/>
            <person name="Brubaker R.R."/>
            <person name="Fowler J."/>
            <person name="Hinnebusch J."/>
            <person name="Marceau M."/>
            <person name="Medigue C."/>
            <person name="Simonet M."/>
            <person name="Chenal-Francisque V."/>
            <person name="Souza B."/>
            <person name="Dacheux D."/>
            <person name="Elliott J.M."/>
            <person name="Derbise A."/>
            <person name="Hauser L.J."/>
            <person name="Garcia E."/>
        </authorList>
    </citation>
    <scope>NUCLEOTIDE SEQUENCE [LARGE SCALE GENOMIC DNA]</scope>
    <source>
        <strain>IP32953</strain>
    </source>
</reference>
<evidence type="ECO:0000255" key="1">
    <source>
        <dbReference type="HAMAP-Rule" id="MF_00508"/>
    </source>
</evidence>
<evidence type="ECO:0000305" key="2"/>
<proteinExistence type="inferred from homology"/>
<gene>
    <name evidence="1" type="primary">rpsJ</name>
    <name type="ordered locus">YPTB3699</name>
</gene>
<feature type="chain" id="PRO_0000237121" description="Small ribosomal subunit protein uS10">
    <location>
        <begin position="1"/>
        <end position="103"/>
    </location>
</feature>
<sequence length="103" mass="11767">MQNQRIRIRLKAFDHRLIDQSTAEIVETAKRTGAQVRGPIPLPTRKERFTVLISPHVNKDARDQYEIRTHKRLVDIVEPTEKTVDALMRLDLAAGVDVQISLG</sequence>
<protein>
    <recommendedName>
        <fullName evidence="1">Small ribosomal subunit protein uS10</fullName>
    </recommendedName>
    <alternativeName>
        <fullName evidence="2">30S ribosomal protein S10</fullName>
    </alternativeName>
</protein>
<keyword id="KW-0687">Ribonucleoprotein</keyword>
<keyword id="KW-0689">Ribosomal protein</keyword>
<organism>
    <name type="scientific">Yersinia pseudotuberculosis serotype I (strain IP32953)</name>
    <dbReference type="NCBI Taxonomy" id="273123"/>
    <lineage>
        <taxon>Bacteria</taxon>
        <taxon>Pseudomonadati</taxon>
        <taxon>Pseudomonadota</taxon>
        <taxon>Gammaproteobacteria</taxon>
        <taxon>Enterobacterales</taxon>
        <taxon>Yersiniaceae</taxon>
        <taxon>Yersinia</taxon>
    </lineage>
</organism>
<accession>Q664S0</accession>
<dbReference type="EMBL" id="BX936398">
    <property type="protein sequence ID" value="CAH22937.1"/>
    <property type="molecule type" value="Genomic_DNA"/>
</dbReference>
<dbReference type="RefSeq" id="WP_001181005.1">
    <property type="nucleotide sequence ID" value="NZ_CP009712.1"/>
</dbReference>
<dbReference type="SMR" id="Q664S0"/>
<dbReference type="GeneID" id="98390443"/>
<dbReference type="KEGG" id="ypo:BZ17_2888"/>
<dbReference type="KEGG" id="yps:YPTB3699"/>
<dbReference type="PATRIC" id="fig|273123.14.peg.3029"/>
<dbReference type="Proteomes" id="UP000001011">
    <property type="component" value="Chromosome"/>
</dbReference>
<dbReference type="GO" id="GO:1990904">
    <property type="term" value="C:ribonucleoprotein complex"/>
    <property type="evidence" value="ECO:0007669"/>
    <property type="project" value="UniProtKB-KW"/>
</dbReference>
<dbReference type="GO" id="GO:0005840">
    <property type="term" value="C:ribosome"/>
    <property type="evidence" value="ECO:0007669"/>
    <property type="project" value="UniProtKB-KW"/>
</dbReference>
<dbReference type="GO" id="GO:0003735">
    <property type="term" value="F:structural constituent of ribosome"/>
    <property type="evidence" value="ECO:0007669"/>
    <property type="project" value="InterPro"/>
</dbReference>
<dbReference type="GO" id="GO:0000049">
    <property type="term" value="F:tRNA binding"/>
    <property type="evidence" value="ECO:0007669"/>
    <property type="project" value="UniProtKB-UniRule"/>
</dbReference>
<dbReference type="GO" id="GO:0006412">
    <property type="term" value="P:translation"/>
    <property type="evidence" value="ECO:0007669"/>
    <property type="project" value="UniProtKB-UniRule"/>
</dbReference>
<dbReference type="FunFam" id="3.30.70.600:FF:000001">
    <property type="entry name" value="30S ribosomal protein S10"/>
    <property type="match status" value="1"/>
</dbReference>
<dbReference type="Gene3D" id="3.30.70.600">
    <property type="entry name" value="Ribosomal protein S10 domain"/>
    <property type="match status" value="1"/>
</dbReference>
<dbReference type="HAMAP" id="MF_00508">
    <property type="entry name" value="Ribosomal_uS10"/>
    <property type="match status" value="1"/>
</dbReference>
<dbReference type="InterPro" id="IPR001848">
    <property type="entry name" value="Ribosomal_uS10"/>
</dbReference>
<dbReference type="InterPro" id="IPR018268">
    <property type="entry name" value="Ribosomal_uS10_CS"/>
</dbReference>
<dbReference type="InterPro" id="IPR027486">
    <property type="entry name" value="Ribosomal_uS10_dom"/>
</dbReference>
<dbReference type="InterPro" id="IPR036838">
    <property type="entry name" value="Ribosomal_uS10_dom_sf"/>
</dbReference>
<dbReference type="NCBIfam" id="NF001861">
    <property type="entry name" value="PRK00596.1"/>
    <property type="match status" value="1"/>
</dbReference>
<dbReference type="NCBIfam" id="TIGR01049">
    <property type="entry name" value="rpsJ_bact"/>
    <property type="match status" value="1"/>
</dbReference>
<dbReference type="PANTHER" id="PTHR11700">
    <property type="entry name" value="30S RIBOSOMAL PROTEIN S10 FAMILY MEMBER"/>
    <property type="match status" value="1"/>
</dbReference>
<dbReference type="Pfam" id="PF00338">
    <property type="entry name" value="Ribosomal_S10"/>
    <property type="match status" value="1"/>
</dbReference>
<dbReference type="PRINTS" id="PR00971">
    <property type="entry name" value="RIBOSOMALS10"/>
</dbReference>
<dbReference type="SMART" id="SM01403">
    <property type="entry name" value="Ribosomal_S10"/>
    <property type="match status" value="1"/>
</dbReference>
<dbReference type="SUPFAM" id="SSF54999">
    <property type="entry name" value="Ribosomal protein S10"/>
    <property type="match status" value="1"/>
</dbReference>
<dbReference type="PROSITE" id="PS00361">
    <property type="entry name" value="RIBOSOMAL_S10"/>
    <property type="match status" value="1"/>
</dbReference>
<name>RS10_YERPS</name>